<protein>
    <recommendedName>
        <fullName evidence="1">Tyrosine--tRNA ligase</fullName>
        <ecNumber evidence="1">6.1.1.1</ecNumber>
    </recommendedName>
    <alternativeName>
        <fullName evidence="1">Tyrosyl-tRNA synthetase</fullName>
        <shortName evidence="1">TyrRS</shortName>
    </alternativeName>
</protein>
<evidence type="ECO:0000255" key="1">
    <source>
        <dbReference type="HAMAP-Rule" id="MF_02009"/>
    </source>
</evidence>
<sequence>MDVEERLSLVLRYPTEEVITVEELRELFQGGYKLNHYIGFEISGFIHIGTGVVSMSKVVDLQRAGVRTTVFLADIHSWLNNKLGGDLDTIRRVAVTYYVETFKRIIEVLGGDPDATRFVLGSDLYHHNDEYWFLLMDITRHLTLSQVRHSLTILGRKMGESIPLAYLVYPPLQVADVFALGAHIPHGGIDQRRAHILARQVADKIRFYPLTVDGKRIKPVALHHRLLPALNISSKPSSKEELSELKMSKSIPQSAIFVHDSPEEIRQKVAKAYCPPREVEYNPVLELLRIAAFREERKTPLVIKRPEKYGGDVEVWKYEELEAMYKEGKIHPADLKAVTAEALAALLEPVYKFFQGPGAKLLEEMRNIAITR</sequence>
<dbReference type="EC" id="6.1.1.1" evidence="1"/>
<dbReference type="EMBL" id="CP000561">
    <property type="protein sequence ID" value="ABO09477.1"/>
    <property type="molecule type" value="Genomic_DNA"/>
</dbReference>
<dbReference type="RefSeq" id="WP_011850735.1">
    <property type="nucleotide sequence ID" value="NC_009073.1"/>
</dbReference>
<dbReference type="SMR" id="A3MXW0"/>
<dbReference type="STRING" id="410359.Pcal_2062"/>
<dbReference type="GeneID" id="4910005"/>
<dbReference type="KEGG" id="pcl:Pcal_2062"/>
<dbReference type="eggNOG" id="arCOG01886">
    <property type="taxonomic scope" value="Archaea"/>
</dbReference>
<dbReference type="HOGENOM" id="CLU_035267_1_1_2"/>
<dbReference type="OrthoDB" id="8389at2157"/>
<dbReference type="Proteomes" id="UP000001431">
    <property type="component" value="Chromosome"/>
</dbReference>
<dbReference type="GO" id="GO:0005737">
    <property type="term" value="C:cytoplasm"/>
    <property type="evidence" value="ECO:0007669"/>
    <property type="project" value="UniProtKB-SubCell"/>
</dbReference>
<dbReference type="GO" id="GO:0005524">
    <property type="term" value="F:ATP binding"/>
    <property type="evidence" value="ECO:0007669"/>
    <property type="project" value="UniProtKB-UniRule"/>
</dbReference>
<dbReference type="GO" id="GO:0004831">
    <property type="term" value="F:tyrosine-tRNA ligase activity"/>
    <property type="evidence" value="ECO:0007669"/>
    <property type="project" value="UniProtKB-UniRule"/>
</dbReference>
<dbReference type="GO" id="GO:0006437">
    <property type="term" value="P:tyrosyl-tRNA aminoacylation"/>
    <property type="evidence" value="ECO:0007669"/>
    <property type="project" value="UniProtKB-UniRule"/>
</dbReference>
<dbReference type="Gene3D" id="3.40.50.620">
    <property type="entry name" value="HUPs"/>
    <property type="match status" value="2"/>
</dbReference>
<dbReference type="HAMAP" id="MF_02009">
    <property type="entry name" value="Tyr_tRNA_synth_type4"/>
    <property type="match status" value="1"/>
</dbReference>
<dbReference type="InterPro" id="IPR002305">
    <property type="entry name" value="aa-tRNA-synth_Ic"/>
</dbReference>
<dbReference type="InterPro" id="IPR014729">
    <property type="entry name" value="Rossmann-like_a/b/a_fold"/>
</dbReference>
<dbReference type="InterPro" id="IPR023678">
    <property type="entry name" value="Tyr-tRNA-ligase_4"/>
</dbReference>
<dbReference type="InterPro" id="IPR023617">
    <property type="entry name" value="Tyr-tRNA-ligase_arc/euk-type"/>
</dbReference>
<dbReference type="InterPro" id="IPR050489">
    <property type="entry name" value="Tyr-tRNA_synthase"/>
</dbReference>
<dbReference type="NCBIfam" id="NF006330">
    <property type="entry name" value="PRK08560.1"/>
    <property type="match status" value="1"/>
</dbReference>
<dbReference type="PANTHER" id="PTHR46264:SF4">
    <property type="entry name" value="TYROSINE--TRNA LIGASE, CYTOPLASMIC"/>
    <property type="match status" value="1"/>
</dbReference>
<dbReference type="PANTHER" id="PTHR46264">
    <property type="entry name" value="TYROSINE-TRNA LIGASE"/>
    <property type="match status" value="1"/>
</dbReference>
<dbReference type="Pfam" id="PF00579">
    <property type="entry name" value="tRNA-synt_1b"/>
    <property type="match status" value="1"/>
</dbReference>
<dbReference type="PIRSF" id="PIRSF006588">
    <property type="entry name" value="TyrRS_arch_euk"/>
    <property type="match status" value="1"/>
</dbReference>
<dbReference type="SUPFAM" id="SSF52374">
    <property type="entry name" value="Nucleotidylyl transferase"/>
    <property type="match status" value="1"/>
</dbReference>
<gene>
    <name evidence="1" type="primary">tyrS</name>
    <name type="ordered locus">Pcal_2062</name>
</gene>
<accession>A3MXW0</accession>
<feature type="chain" id="PRO_0000303680" description="Tyrosine--tRNA ligase">
    <location>
        <begin position="1"/>
        <end position="372"/>
    </location>
</feature>
<feature type="short sequence motif" description="'KMSKS' region">
    <location>
        <begin position="246"/>
        <end position="250"/>
    </location>
</feature>
<feature type="binding site" evidence="1">
    <location>
        <position position="37"/>
    </location>
    <ligand>
        <name>L-tyrosine</name>
        <dbReference type="ChEBI" id="CHEBI:58315"/>
    </ligand>
</feature>
<feature type="binding site" evidence="1">
    <location>
        <position position="169"/>
    </location>
    <ligand>
        <name>L-tyrosine</name>
        <dbReference type="ChEBI" id="CHEBI:58315"/>
    </ligand>
</feature>
<feature type="binding site" evidence="1">
    <location>
        <position position="173"/>
    </location>
    <ligand>
        <name>L-tyrosine</name>
        <dbReference type="ChEBI" id="CHEBI:58315"/>
    </ligand>
</feature>
<feature type="binding site" evidence="1">
    <location>
        <position position="176"/>
    </location>
    <ligand>
        <name>L-tyrosine</name>
        <dbReference type="ChEBI" id="CHEBI:58315"/>
    </ligand>
</feature>
<feature type="binding site" evidence="1">
    <location>
        <position position="191"/>
    </location>
    <ligand>
        <name>L-tyrosine</name>
        <dbReference type="ChEBI" id="CHEBI:58315"/>
    </ligand>
</feature>
<feature type="binding site" evidence="1">
    <location>
        <position position="249"/>
    </location>
    <ligand>
        <name>ATP</name>
        <dbReference type="ChEBI" id="CHEBI:30616"/>
    </ligand>
</feature>
<reference key="1">
    <citation type="submission" date="2007-02" db="EMBL/GenBank/DDBJ databases">
        <title>Complete sequence of Pyrobaculum calidifontis JCM 11548.</title>
        <authorList>
            <consortium name="US DOE Joint Genome Institute"/>
            <person name="Copeland A."/>
            <person name="Lucas S."/>
            <person name="Lapidus A."/>
            <person name="Barry K."/>
            <person name="Glavina del Rio T."/>
            <person name="Dalin E."/>
            <person name="Tice H."/>
            <person name="Pitluck S."/>
            <person name="Chain P."/>
            <person name="Malfatti S."/>
            <person name="Shin M."/>
            <person name="Vergez L."/>
            <person name="Schmutz J."/>
            <person name="Larimer F."/>
            <person name="Land M."/>
            <person name="Hauser L."/>
            <person name="Kyrpides N."/>
            <person name="Mikhailova N."/>
            <person name="Cozen A.E."/>
            <person name="Fitz-Gibbon S.T."/>
            <person name="House C.H."/>
            <person name="Saltikov C."/>
            <person name="Lowe T.M."/>
            <person name="Richardson P."/>
        </authorList>
    </citation>
    <scope>NUCLEOTIDE SEQUENCE [LARGE SCALE GENOMIC DNA]</scope>
    <source>
        <strain>DSM 21063 / JCM 11548 / VA1</strain>
    </source>
</reference>
<proteinExistence type="inferred from homology"/>
<name>SYY_PYRCJ</name>
<organism>
    <name type="scientific">Pyrobaculum calidifontis (strain DSM 21063 / JCM 11548 / VA1)</name>
    <dbReference type="NCBI Taxonomy" id="410359"/>
    <lineage>
        <taxon>Archaea</taxon>
        <taxon>Thermoproteota</taxon>
        <taxon>Thermoprotei</taxon>
        <taxon>Thermoproteales</taxon>
        <taxon>Thermoproteaceae</taxon>
        <taxon>Pyrobaculum</taxon>
    </lineage>
</organism>
<comment type="function">
    <text evidence="1">Catalyzes the attachment of tyrosine to tRNA(Tyr) in a two-step reaction: tyrosine is first activated by ATP to form Tyr-AMP and then transferred to the acceptor end of tRNA(Tyr).</text>
</comment>
<comment type="catalytic activity">
    <reaction evidence="1">
        <text>tRNA(Tyr) + L-tyrosine + ATP = L-tyrosyl-tRNA(Tyr) + AMP + diphosphate + H(+)</text>
        <dbReference type="Rhea" id="RHEA:10220"/>
        <dbReference type="Rhea" id="RHEA-COMP:9706"/>
        <dbReference type="Rhea" id="RHEA-COMP:9707"/>
        <dbReference type="ChEBI" id="CHEBI:15378"/>
        <dbReference type="ChEBI" id="CHEBI:30616"/>
        <dbReference type="ChEBI" id="CHEBI:33019"/>
        <dbReference type="ChEBI" id="CHEBI:58315"/>
        <dbReference type="ChEBI" id="CHEBI:78442"/>
        <dbReference type="ChEBI" id="CHEBI:78536"/>
        <dbReference type="ChEBI" id="CHEBI:456215"/>
        <dbReference type="EC" id="6.1.1.1"/>
    </reaction>
</comment>
<comment type="subunit">
    <text evidence="1">Homodimer.</text>
</comment>
<comment type="subcellular location">
    <subcellularLocation>
        <location evidence="1">Cytoplasm</location>
    </subcellularLocation>
</comment>
<comment type="similarity">
    <text evidence="1">Belongs to the class-I aminoacyl-tRNA synthetase family. TyrS type 4 subfamily.</text>
</comment>
<keyword id="KW-0030">Aminoacyl-tRNA synthetase</keyword>
<keyword id="KW-0067">ATP-binding</keyword>
<keyword id="KW-0963">Cytoplasm</keyword>
<keyword id="KW-0436">Ligase</keyword>
<keyword id="KW-0547">Nucleotide-binding</keyword>
<keyword id="KW-0648">Protein biosynthesis</keyword>